<evidence type="ECO:0000250" key="1">
    <source>
        <dbReference type="UniProtKB" id="Q9Y3D3"/>
    </source>
</evidence>
<evidence type="ECO:0000255" key="2"/>
<evidence type="ECO:0000305" key="3"/>
<dbReference type="EMBL" id="CR857379">
    <property type="protein sequence ID" value="CAH89673.1"/>
    <property type="molecule type" value="mRNA"/>
</dbReference>
<dbReference type="RefSeq" id="NP_001124756.1">
    <property type="nucleotide sequence ID" value="NM_001131284.1"/>
</dbReference>
<dbReference type="SMR" id="Q5REY4"/>
<dbReference type="FunCoup" id="Q5REY4">
    <property type="interactions" value="2388"/>
</dbReference>
<dbReference type="GeneID" id="100171606"/>
<dbReference type="KEGG" id="pon:100171606"/>
<dbReference type="CTD" id="51021"/>
<dbReference type="InParanoid" id="Q5REY4"/>
<dbReference type="OrthoDB" id="407221at2759"/>
<dbReference type="Proteomes" id="UP000001595">
    <property type="component" value="Unplaced"/>
</dbReference>
<dbReference type="GO" id="GO:0005763">
    <property type="term" value="C:mitochondrial small ribosomal subunit"/>
    <property type="evidence" value="ECO:0000250"/>
    <property type="project" value="UniProtKB"/>
</dbReference>
<dbReference type="GO" id="GO:0003735">
    <property type="term" value="F:structural constituent of ribosome"/>
    <property type="evidence" value="ECO:0007669"/>
    <property type="project" value="InterPro"/>
</dbReference>
<dbReference type="GO" id="GO:0032543">
    <property type="term" value="P:mitochondrial translation"/>
    <property type="evidence" value="ECO:0007669"/>
    <property type="project" value="TreeGrafter"/>
</dbReference>
<dbReference type="FunFam" id="3.30.1320.10:FF:000004">
    <property type="entry name" value="28S ribosomal protein S16, mitochondrial"/>
    <property type="match status" value="1"/>
</dbReference>
<dbReference type="Gene3D" id="3.30.1320.10">
    <property type="match status" value="1"/>
</dbReference>
<dbReference type="HAMAP" id="MF_00385">
    <property type="entry name" value="Ribosomal_bS16"/>
    <property type="match status" value="1"/>
</dbReference>
<dbReference type="InterPro" id="IPR000307">
    <property type="entry name" value="Ribosomal_bS16"/>
</dbReference>
<dbReference type="InterPro" id="IPR023803">
    <property type="entry name" value="Ribosomal_bS16_dom_sf"/>
</dbReference>
<dbReference type="NCBIfam" id="TIGR00002">
    <property type="entry name" value="S16"/>
    <property type="match status" value="1"/>
</dbReference>
<dbReference type="PANTHER" id="PTHR12919">
    <property type="entry name" value="30S RIBOSOMAL PROTEIN S16"/>
    <property type="match status" value="1"/>
</dbReference>
<dbReference type="PANTHER" id="PTHR12919:SF20">
    <property type="entry name" value="SMALL RIBOSOMAL SUBUNIT PROTEIN BS16M"/>
    <property type="match status" value="1"/>
</dbReference>
<dbReference type="Pfam" id="PF00886">
    <property type="entry name" value="Ribosomal_S16"/>
    <property type="match status" value="1"/>
</dbReference>
<dbReference type="SUPFAM" id="SSF54565">
    <property type="entry name" value="Ribosomal protein S16"/>
    <property type="match status" value="1"/>
</dbReference>
<accession>Q5REY4</accession>
<organism>
    <name type="scientific">Pongo abelii</name>
    <name type="common">Sumatran orangutan</name>
    <name type="synonym">Pongo pygmaeus abelii</name>
    <dbReference type="NCBI Taxonomy" id="9601"/>
    <lineage>
        <taxon>Eukaryota</taxon>
        <taxon>Metazoa</taxon>
        <taxon>Chordata</taxon>
        <taxon>Craniata</taxon>
        <taxon>Vertebrata</taxon>
        <taxon>Euteleostomi</taxon>
        <taxon>Mammalia</taxon>
        <taxon>Eutheria</taxon>
        <taxon>Euarchontoglires</taxon>
        <taxon>Primates</taxon>
        <taxon>Haplorrhini</taxon>
        <taxon>Catarrhini</taxon>
        <taxon>Hominidae</taxon>
        <taxon>Pongo</taxon>
    </lineage>
</organism>
<proteinExistence type="evidence at transcript level"/>
<gene>
    <name type="primary">MRPS16</name>
</gene>
<comment type="subunit">
    <text evidence="1">Component of the mitochondrial ribosome small subunit (28S) which comprises a 12S rRNA and about 30 distinct proteins.</text>
</comment>
<comment type="subcellular location">
    <subcellularLocation>
        <location evidence="1">Mitochondrion</location>
    </subcellularLocation>
</comment>
<comment type="similarity">
    <text evidence="3">Belongs to the bacterial ribosomal protein bS16 family.</text>
</comment>
<reference key="1">
    <citation type="submission" date="2004-11" db="EMBL/GenBank/DDBJ databases">
        <authorList>
            <consortium name="The German cDNA consortium"/>
        </authorList>
    </citation>
    <scope>NUCLEOTIDE SEQUENCE [LARGE SCALE MRNA]</scope>
    <source>
        <tissue>Heart</tissue>
    </source>
</reference>
<protein>
    <recommendedName>
        <fullName evidence="3">Small ribosomal subunit protein bS16m</fullName>
    </recommendedName>
    <alternativeName>
        <fullName>28S ribosomal protein S16, mitochondrial</fullName>
        <shortName>MRP-S16</shortName>
        <shortName>S16mt</shortName>
    </alternativeName>
</protein>
<sequence>MVHLTTLLCKAYRGGHLTIRLALGGCTNRPFYRIVAAHNKCPRDGRFVEQLGSYDPLPNSHGEKLVALNLDRIRHWIGCGAHLSKPMEKLLGLAGFFPLHPMMITNAERLRRKLAREVLLASQKTDAEATDAEATET</sequence>
<feature type="transit peptide" description="Mitochondrion" evidence="2">
    <location>
        <begin position="1"/>
        <end position="34"/>
    </location>
</feature>
<feature type="chain" id="PRO_0000253621" description="Small ribosomal subunit protein bS16m">
    <location>
        <begin position="35"/>
        <end position="137"/>
    </location>
</feature>
<feature type="modified residue" description="Phosphothreonine" evidence="1">
    <location>
        <position position="130"/>
    </location>
</feature>
<keyword id="KW-0496">Mitochondrion</keyword>
<keyword id="KW-0597">Phosphoprotein</keyword>
<keyword id="KW-1185">Reference proteome</keyword>
<keyword id="KW-0687">Ribonucleoprotein</keyword>
<keyword id="KW-0689">Ribosomal protein</keyword>
<keyword id="KW-0809">Transit peptide</keyword>
<name>RT16_PONAB</name>